<proteinExistence type="evidence at transcript level"/>
<organism>
    <name type="scientific">Danio rerio</name>
    <name type="common">Zebrafish</name>
    <name type="synonym">Brachydanio rerio</name>
    <dbReference type="NCBI Taxonomy" id="7955"/>
    <lineage>
        <taxon>Eukaryota</taxon>
        <taxon>Metazoa</taxon>
        <taxon>Chordata</taxon>
        <taxon>Craniata</taxon>
        <taxon>Vertebrata</taxon>
        <taxon>Euteleostomi</taxon>
        <taxon>Actinopterygii</taxon>
        <taxon>Neopterygii</taxon>
        <taxon>Teleostei</taxon>
        <taxon>Ostariophysi</taxon>
        <taxon>Cypriniformes</taxon>
        <taxon>Danionidae</taxon>
        <taxon>Danioninae</taxon>
        <taxon>Danio</taxon>
    </lineage>
</organism>
<evidence type="ECO:0000250" key="1">
    <source>
        <dbReference type="UniProtKB" id="O75934"/>
    </source>
</evidence>
<evidence type="ECO:0000255" key="2"/>
<evidence type="ECO:0000305" key="3"/>
<accession>Q5RKQ0</accession>
<reference key="1">
    <citation type="submission" date="2004-11" db="EMBL/GenBank/DDBJ databases">
        <authorList>
            <consortium name="NIH - Zebrafish Gene Collection (ZGC) project"/>
        </authorList>
    </citation>
    <scope>NUCLEOTIDE SEQUENCE [LARGE SCALE MRNA]</scope>
    <source>
        <tissue>Olfactory epithelium</tissue>
    </source>
</reference>
<protein>
    <recommendedName>
        <fullName>Pre-mRNA-splicing factor SPF27</fullName>
    </recommendedName>
    <alternativeName>
        <fullName>Protein BCAS2 homolog</fullName>
    </alternativeName>
</protein>
<feature type="chain" id="PRO_0000064860" description="Pre-mRNA-splicing factor SPF27">
    <location>
        <begin position="1"/>
        <end position="225"/>
    </location>
</feature>
<feature type="coiled-coil region" evidence="2">
    <location>
        <begin position="138"/>
        <end position="222"/>
    </location>
</feature>
<comment type="function">
    <text evidence="1">Required for pre-mRNA splicing as component of the activated spliceosome. May have a scaffolding role in the spliceosome assembly as it contacts all other components of the core complex.</text>
</comment>
<comment type="subunit">
    <text evidence="1">Component of the pre-catalytic and catalytic spliceosome complexes. Component of the postcatalytic spliceosome P complex.</text>
</comment>
<comment type="subcellular location">
    <subcellularLocation>
        <location evidence="1">Nucleus</location>
    </subcellularLocation>
</comment>
<comment type="similarity">
    <text evidence="3">Belongs to the SPF27 family.</text>
</comment>
<gene>
    <name type="primary">bcas2</name>
    <name type="ORF">zgc:101730</name>
</gene>
<dbReference type="EMBL" id="BC085427">
    <property type="protein sequence ID" value="AAH85427.1"/>
    <property type="molecule type" value="mRNA"/>
</dbReference>
<dbReference type="RefSeq" id="NP_001007775.1">
    <property type="nucleotide sequence ID" value="NM_001007774.1"/>
</dbReference>
<dbReference type="SMR" id="Q5RKQ0"/>
<dbReference type="BioGRID" id="93870">
    <property type="interactions" value="1"/>
</dbReference>
<dbReference type="FunCoup" id="Q5RKQ0">
    <property type="interactions" value="2359"/>
</dbReference>
<dbReference type="STRING" id="7955.ENSDARP00000064065"/>
<dbReference type="PaxDb" id="7955-ENSDARP00000064065"/>
<dbReference type="Ensembl" id="ENSDART00000064066">
    <property type="protein sequence ID" value="ENSDARP00000064065"/>
    <property type="gene ID" value="ENSDARG00000043631"/>
</dbReference>
<dbReference type="GeneID" id="493614"/>
<dbReference type="KEGG" id="dre:493614"/>
<dbReference type="AGR" id="ZFIN:ZDB-GENE-030408-5"/>
<dbReference type="CTD" id="10286"/>
<dbReference type="ZFIN" id="ZDB-GENE-030408-5">
    <property type="gene designation" value="bcas2"/>
</dbReference>
<dbReference type="eggNOG" id="KOG3096">
    <property type="taxonomic scope" value="Eukaryota"/>
</dbReference>
<dbReference type="HOGENOM" id="CLU_082523_2_1_1"/>
<dbReference type="InParanoid" id="Q5RKQ0"/>
<dbReference type="OMA" id="SAWQESI"/>
<dbReference type="OrthoDB" id="205794at2759"/>
<dbReference type="PhylomeDB" id="Q5RKQ0"/>
<dbReference type="Reactome" id="R-DRE-72163">
    <property type="pathway name" value="mRNA Splicing - Major Pathway"/>
</dbReference>
<dbReference type="PRO" id="PR:Q5RKQ0"/>
<dbReference type="Proteomes" id="UP000000437">
    <property type="component" value="Chromosome 8"/>
</dbReference>
<dbReference type="Bgee" id="ENSDARG00000043631">
    <property type="expression patterns" value="Expressed in mature ovarian follicle and 35 other cell types or tissues"/>
</dbReference>
<dbReference type="GO" id="GO:0071013">
    <property type="term" value="C:catalytic step 2 spliceosome"/>
    <property type="evidence" value="ECO:0000318"/>
    <property type="project" value="GO_Central"/>
</dbReference>
<dbReference type="GO" id="GO:0005634">
    <property type="term" value="C:nucleus"/>
    <property type="evidence" value="ECO:0000250"/>
    <property type="project" value="UniProtKB"/>
</dbReference>
<dbReference type="GO" id="GO:0000974">
    <property type="term" value="C:Prp19 complex"/>
    <property type="evidence" value="ECO:0000318"/>
    <property type="project" value="GO_Central"/>
</dbReference>
<dbReference type="GO" id="GO:0071007">
    <property type="term" value="C:U2-type catalytic step 2 spliceosome"/>
    <property type="evidence" value="ECO:0000250"/>
    <property type="project" value="UniProtKB"/>
</dbReference>
<dbReference type="GO" id="GO:0000398">
    <property type="term" value="P:mRNA splicing, via spliceosome"/>
    <property type="evidence" value="ECO:0000250"/>
    <property type="project" value="UniProtKB"/>
</dbReference>
<dbReference type="InterPro" id="IPR008409">
    <property type="entry name" value="SPF27"/>
</dbReference>
<dbReference type="PANTHER" id="PTHR13296">
    <property type="entry name" value="BCAS2 PROTEIN"/>
    <property type="match status" value="1"/>
</dbReference>
<dbReference type="PANTHER" id="PTHR13296:SF0">
    <property type="entry name" value="PRE-MRNA-SPLICING FACTOR SPF27"/>
    <property type="match status" value="1"/>
</dbReference>
<dbReference type="Pfam" id="PF05700">
    <property type="entry name" value="BCAS2"/>
    <property type="match status" value="1"/>
</dbReference>
<name>SPF27_DANRE</name>
<keyword id="KW-0175">Coiled coil</keyword>
<keyword id="KW-0507">mRNA processing</keyword>
<keyword id="KW-0508">mRNA splicing</keyword>
<keyword id="KW-0539">Nucleus</keyword>
<keyword id="KW-1185">Reference proteome</keyword>
<keyword id="KW-0747">Spliceosome</keyword>
<sequence>MAGPASVAGDVFVDALPYFDQGYDATGVREAAAALVEEETRRYRPTKNYLSYLPTPDFSAFETEIMRNEFERLAARQPMELLSMKRYELPAPSSGQKNDMTAWQDCVNNSMAQLEHQAVRIENLELMAQYGTNAWKMSNDNLALMIENSQKELQNVRKEIQDLNWQRKNDQLAGGAKLRELESNWVSLVSKNYEIERAIVQLENEVAQMKQQQGDENKENIRQDF</sequence>